<organism>
    <name type="scientific">Escherichia coli O6:K15:H31 (strain 536 / UPEC)</name>
    <dbReference type="NCBI Taxonomy" id="362663"/>
    <lineage>
        <taxon>Bacteria</taxon>
        <taxon>Pseudomonadati</taxon>
        <taxon>Pseudomonadota</taxon>
        <taxon>Gammaproteobacteria</taxon>
        <taxon>Enterobacterales</taxon>
        <taxon>Enterobacteriaceae</taxon>
        <taxon>Escherichia</taxon>
    </lineage>
</organism>
<gene>
    <name type="primary">ecpB</name>
    <name type="synonym">matC</name>
    <name type="ordered locus">ECP_0355</name>
</gene>
<name>ECPB_ECOL5</name>
<feature type="signal peptide" evidence="2">
    <location>
        <begin position="1"/>
        <end position="20"/>
    </location>
</feature>
<feature type="chain" id="PRO_0000369166" description="Probable fimbrial chaperone EcpB">
    <location>
        <begin position="21"/>
        <end position="222"/>
    </location>
</feature>
<dbReference type="EMBL" id="CP000247">
    <property type="protein sequence ID" value="ABG68389.1"/>
    <property type="status" value="ALT_INIT"/>
    <property type="molecule type" value="Genomic_DNA"/>
</dbReference>
<dbReference type="RefSeq" id="WP_000716404.1">
    <property type="nucleotide sequence ID" value="NC_008253.1"/>
</dbReference>
<dbReference type="SMR" id="Q0TKZ2"/>
<dbReference type="KEGG" id="ecp:ECP_0355"/>
<dbReference type="HOGENOM" id="CLU_106652_0_0_6"/>
<dbReference type="Proteomes" id="UP000009182">
    <property type="component" value="Chromosome"/>
</dbReference>
<dbReference type="Gene3D" id="2.60.40.10">
    <property type="entry name" value="Immunoglobulins"/>
    <property type="match status" value="1"/>
</dbReference>
<dbReference type="InterPro" id="IPR040695">
    <property type="entry name" value="EcpB_C"/>
</dbReference>
<dbReference type="InterPro" id="IPR013783">
    <property type="entry name" value="Ig-like_fold"/>
</dbReference>
<dbReference type="InterPro" id="IPR008962">
    <property type="entry name" value="PapD-like_sf"/>
</dbReference>
<dbReference type="Pfam" id="PF18649">
    <property type="entry name" value="EcpB_C"/>
    <property type="match status" value="1"/>
</dbReference>
<dbReference type="SUPFAM" id="SSF49354">
    <property type="entry name" value="PapD-like"/>
    <property type="match status" value="1"/>
</dbReference>
<evidence type="ECO:0000250" key="1"/>
<evidence type="ECO:0000255" key="2"/>
<evidence type="ECO:0000305" key="3"/>
<reference key="1">
    <citation type="journal article" date="2006" name="Mol. Microbiol.">
        <title>Role of pathogenicity island-associated integrases in the genome plasticity of uropathogenic Escherichia coli strain 536.</title>
        <authorList>
            <person name="Hochhut B."/>
            <person name="Wilde C."/>
            <person name="Balling G."/>
            <person name="Middendorf B."/>
            <person name="Dobrindt U."/>
            <person name="Brzuszkiewicz E."/>
            <person name="Gottschalk G."/>
            <person name="Carniel E."/>
            <person name="Hacker J."/>
        </authorList>
    </citation>
    <scope>NUCLEOTIDE SEQUENCE [LARGE SCALE GENOMIC DNA]</scope>
    <source>
        <strain>536 / UPEC</strain>
    </source>
</reference>
<accession>Q0TKZ2</accession>
<sequence length="222" mass="24501">MKKHLLPLALLFSGISPAQALDVGDISSFMNSDSSTLSKTIQNSTDSGRLINIRLERLSSPLDDGQVIAMDKPDELLLTPASLLLPAQASEVIRFFYKGPADEKERYYRIVWFDQALSDAQRDNANRSAVATASARIGTILVVAPRQANYHFQYANGSLTNTGNATLRILAYGPCLKAANGKECKENYYLMPGKSRRFTRVDTADNKGRVALWQGDKFIPVK</sequence>
<proteinExistence type="inferred from homology"/>
<comment type="function">
    <text evidence="1">Part of the ecpRABCDE operon, which encodes the E.coli common pilus (ECP). ECP is found in both commensal and pathogenic strains and plays a dual role in early-stage biofilm development and host cell recognition (By similarity).</text>
</comment>
<comment type="induction">
    <text evidence="1">Negatively regulated by H-NS. Positively regulated by IHF and EcpR (By similarity).</text>
</comment>
<comment type="similarity">
    <text evidence="3">Belongs to the EcpB/EcpE family.</text>
</comment>
<comment type="sequence caution" evidence="3">
    <conflict type="erroneous initiation">
        <sequence resource="EMBL-CDS" id="ABG68389"/>
    </conflict>
</comment>
<protein>
    <recommendedName>
        <fullName>Probable fimbrial chaperone EcpB</fullName>
    </recommendedName>
</protein>
<keyword id="KW-0143">Chaperone</keyword>
<keyword id="KW-1029">Fimbrium biogenesis</keyword>
<keyword id="KW-0732">Signal</keyword>